<reference key="1">
    <citation type="journal article" date="2005" name="Genome Res.">
        <title>Coping with cold: the genome of the versatile marine Antarctica bacterium Pseudoalteromonas haloplanktis TAC125.</title>
        <authorList>
            <person name="Medigue C."/>
            <person name="Krin E."/>
            <person name="Pascal G."/>
            <person name="Barbe V."/>
            <person name="Bernsel A."/>
            <person name="Bertin P.N."/>
            <person name="Cheung F."/>
            <person name="Cruveiller S."/>
            <person name="D'Amico S."/>
            <person name="Duilio A."/>
            <person name="Fang G."/>
            <person name="Feller G."/>
            <person name="Ho C."/>
            <person name="Mangenot S."/>
            <person name="Marino G."/>
            <person name="Nilsson J."/>
            <person name="Parrilli E."/>
            <person name="Rocha E.P.C."/>
            <person name="Rouy Z."/>
            <person name="Sekowska A."/>
            <person name="Tutino M.L."/>
            <person name="Vallenet D."/>
            <person name="von Heijne G."/>
            <person name="Danchin A."/>
        </authorList>
    </citation>
    <scope>NUCLEOTIDE SEQUENCE [LARGE SCALE GENOMIC DNA]</scope>
    <source>
        <strain>TAC 125</strain>
    </source>
</reference>
<comment type="function">
    <text evidence="1">Bifunctional enzyme which can phosphorylate or dephosphorylate isocitrate dehydrogenase (IDH) on a specific serine residue. This is a regulatory mechanism which enables bacteria to bypass the Krebs cycle via the glyoxylate shunt in response to the source of carbon. When bacteria are grown on glucose, IDH is fully active and unphosphorylated, but when grown on acetate or ethanol, the activity of IDH declines drastically concomitant with its phosphorylation.</text>
</comment>
<comment type="catalytic activity">
    <reaction evidence="1">
        <text>L-seryl-[isocitrate dehydrogenase] + ATP = O-phospho-L-seryl-[isocitrate dehydrogenase] + ADP + H(+)</text>
        <dbReference type="Rhea" id="RHEA:43540"/>
        <dbReference type="Rhea" id="RHEA-COMP:10605"/>
        <dbReference type="Rhea" id="RHEA-COMP:10606"/>
        <dbReference type="ChEBI" id="CHEBI:15378"/>
        <dbReference type="ChEBI" id="CHEBI:29999"/>
        <dbReference type="ChEBI" id="CHEBI:30616"/>
        <dbReference type="ChEBI" id="CHEBI:83421"/>
        <dbReference type="ChEBI" id="CHEBI:456216"/>
        <dbReference type="EC" id="2.7.11.5"/>
    </reaction>
</comment>
<comment type="subcellular location">
    <subcellularLocation>
        <location evidence="1">Cytoplasm</location>
    </subcellularLocation>
</comment>
<comment type="similarity">
    <text evidence="1">Belongs to the AceK family.</text>
</comment>
<sequence>MPDTITNKLQNSTVQDVIATKLARAVFAGFEAMFATFLNITLGAQSRFEQRQYHEVQSAMRERLQVYERQVKSVSEAVKVIAYAELSCPQTWQLAKNIYGNMVKNHENEPIAHTFFNSTFGAIWDDKKIRTVHLFVLKAKYRTQPRPYDSLVKRISLQHGFNSAIKTLITNQVFRVPFSNLNQDVATLQATLTQGAKQQCRQVYELINLNDGYIEYAYSHFYRNKACYLIGRCIAKNGDNMPFAIAILNTPKGLKIDAVMMGADQLSLLFGFARTYFMVDTDQPARYVDYLSVLMPHKQRFELFNAIGFIKHAKTEFYRYKVDTTKNSPASFKYVAAPGTPGMVMLVFTIAGSDHVYKVIKDKFSAPKTATKAQVKEKYNFVKQADRVGRLVDTHEFRYLAFDLSRFSEQLLQQMKEHIGSSLIISGKALILKHVYVERKMTPLNLYINDCDSKALAQVMLDYGRAIKDLAGANIFPGDMLMKNFGVTRWGRVVFYDYDEICPLTDCNFREVPQTQNALEELSSDSYFDIEPNDIFPSQFKVFFSANELAFNAFNSHHSDLFNAQFWQTCQQQVQQGYLPDVYPYKQSWRFK</sequence>
<organism>
    <name type="scientific">Pseudoalteromonas translucida (strain TAC 125)</name>
    <dbReference type="NCBI Taxonomy" id="326442"/>
    <lineage>
        <taxon>Bacteria</taxon>
        <taxon>Pseudomonadati</taxon>
        <taxon>Pseudomonadota</taxon>
        <taxon>Gammaproteobacteria</taxon>
        <taxon>Alteromonadales</taxon>
        <taxon>Pseudoalteromonadaceae</taxon>
        <taxon>Pseudoalteromonas</taxon>
    </lineage>
</organism>
<accession>Q3IKY9</accession>
<gene>
    <name evidence="1" type="primary">aceK1</name>
    <name type="ordered locus">PSHAa1307</name>
</gene>
<name>ACEK1_PSET1</name>
<dbReference type="EC" id="2.7.11.5" evidence="1"/>
<dbReference type="EC" id="3.1.3.-" evidence="1"/>
<dbReference type="EMBL" id="CR954246">
    <property type="protein sequence ID" value="CAI86382.1"/>
    <property type="molecule type" value="Genomic_DNA"/>
</dbReference>
<dbReference type="SMR" id="Q3IKY9"/>
<dbReference type="STRING" id="326442.PSHAa1307"/>
<dbReference type="KEGG" id="pha:PSHAa1307"/>
<dbReference type="PATRIC" id="fig|326442.8.peg.1263"/>
<dbReference type="eggNOG" id="COG4579">
    <property type="taxonomic scope" value="Bacteria"/>
</dbReference>
<dbReference type="HOGENOM" id="CLU_033804_1_1_6"/>
<dbReference type="BioCyc" id="PHAL326442:PSHA_RS06435-MONOMER"/>
<dbReference type="Proteomes" id="UP000006843">
    <property type="component" value="Chromosome I"/>
</dbReference>
<dbReference type="GO" id="GO:0005737">
    <property type="term" value="C:cytoplasm"/>
    <property type="evidence" value="ECO:0007669"/>
    <property type="project" value="UniProtKB-SubCell"/>
</dbReference>
<dbReference type="GO" id="GO:0008772">
    <property type="term" value="F:[isocitrate dehydrogenase (NADP+)] kinase activity"/>
    <property type="evidence" value="ECO:0007669"/>
    <property type="project" value="UniProtKB-UniRule"/>
</dbReference>
<dbReference type="GO" id="GO:0016208">
    <property type="term" value="F:AMP binding"/>
    <property type="evidence" value="ECO:0007669"/>
    <property type="project" value="TreeGrafter"/>
</dbReference>
<dbReference type="GO" id="GO:0005524">
    <property type="term" value="F:ATP binding"/>
    <property type="evidence" value="ECO:0007669"/>
    <property type="project" value="UniProtKB-UniRule"/>
</dbReference>
<dbReference type="GO" id="GO:0004721">
    <property type="term" value="F:phosphoprotein phosphatase activity"/>
    <property type="evidence" value="ECO:0007669"/>
    <property type="project" value="UniProtKB-KW"/>
</dbReference>
<dbReference type="GO" id="GO:0004674">
    <property type="term" value="F:protein serine/threonine kinase activity"/>
    <property type="evidence" value="ECO:0007669"/>
    <property type="project" value="UniProtKB-KW"/>
</dbReference>
<dbReference type="GO" id="GO:0006006">
    <property type="term" value="P:glucose metabolic process"/>
    <property type="evidence" value="ECO:0007669"/>
    <property type="project" value="InterPro"/>
</dbReference>
<dbReference type="GO" id="GO:0006097">
    <property type="term" value="P:glyoxylate cycle"/>
    <property type="evidence" value="ECO:0007669"/>
    <property type="project" value="UniProtKB-UniRule"/>
</dbReference>
<dbReference type="GO" id="GO:0006099">
    <property type="term" value="P:tricarboxylic acid cycle"/>
    <property type="evidence" value="ECO:0007669"/>
    <property type="project" value="UniProtKB-UniRule"/>
</dbReference>
<dbReference type="HAMAP" id="MF_00747">
    <property type="entry name" value="AceK"/>
    <property type="match status" value="1"/>
</dbReference>
<dbReference type="InterPro" id="IPR046855">
    <property type="entry name" value="AceK_kinase"/>
</dbReference>
<dbReference type="InterPro" id="IPR046854">
    <property type="entry name" value="AceK_regulatory"/>
</dbReference>
<dbReference type="InterPro" id="IPR010452">
    <property type="entry name" value="Isocitrate_DH_AceK"/>
</dbReference>
<dbReference type="NCBIfam" id="NF002804">
    <property type="entry name" value="PRK02946.1"/>
    <property type="match status" value="1"/>
</dbReference>
<dbReference type="PANTHER" id="PTHR39559">
    <property type="match status" value="1"/>
</dbReference>
<dbReference type="PANTHER" id="PTHR39559:SF1">
    <property type="entry name" value="ISOCITRATE DEHYDROGENASE KINASE_PHOSPHATASE"/>
    <property type="match status" value="1"/>
</dbReference>
<dbReference type="Pfam" id="PF06315">
    <property type="entry name" value="AceK_kinase"/>
    <property type="match status" value="1"/>
</dbReference>
<dbReference type="Pfam" id="PF20423">
    <property type="entry name" value="AceK_regulatory"/>
    <property type="match status" value="1"/>
</dbReference>
<dbReference type="PIRSF" id="PIRSF000719">
    <property type="entry name" value="AceK"/>
    <property type="match status" value="1"/>
</dbReference>
<proteinExistence type="inferred from homology"/>
<keyword id="KW-0067">ATP-binding</keyword>
<keyword id="KW-0963">Cytoplasm</keyword>
<keyword id="KW-0329">Glyoxylate bypass</keyword>
<keyword id="KW-0378">Hydrolase</keyword>
<keyword id="KW-0418">Kinase</keyword>
<keyword id="KW-0547">Nucleotide-binding</keyword>
<keyword id="KW-0904">Protein phosphatase</keyword>
<keyword id="KW-1185">Reference proteome</keyword>
<keyword id="KW-0723">Serine/threonine-protein kinase</keyword>
<keyword id="KW-0808">Transferase</keyword>
<keyword id="KW-0816">Tricarboxylic acid cycle</keyword>
<protein>
    <recommendedName>
        <fullName evidence="1">Isocitrate dehydrogenase kinase/phosphatase 1</fullName>
        <shortName evidence="1">IDH kinase/phosphatase 1</shortName>
        <shortName evidence="1">IDHK/P 1</shortName>
        <ecNumber evidence="1">2.7.11.5</ecNumber>
        <ecNumber evidence="1">3.1.3.-</ecNumber>
    </recommendedName>
</protein>
<evidence type="ECO:0000255" key="1">
    <source>
        <dbReference type="HAMAP-Rule" id="MF_00747"/>
    </source>
</evidence>
<feature type="chain" id="PRO_0000288293" description="Isocitrate dehydrogenase kinase/phosphatase 1">
    <location>
        <begin position="1"/>
        <end position="592"/>
    </location>
</feature>
<feature type="active site" evidence="1">
    <location>
        <position position="393"/>
    </location>
</feature>
<feature type="binding site" evidence="1">
    <location>
        <begin position="337"/>
        <end position="343"/>
    </location>
    <ligand>
        <name>ATP</name>
        <dbReference type="ChEBI" id="CHEBI:30616"/>
    </ligand>
</feature>
<feature type="binding site" evidence="1">
    <location>
        <position position="358"/>
    </location>
    <ligand>
        <name>ATP</name>
        <dbReference type="ChEBI" id="CHEBI:30616"/>
    </ligand>
</feature>